<gene>
    <name type="primary">xylA</name>
</gene>
<accession>P09033</accession>
<name>XYLA_STRVO</name>
<comment type="function">
    <text>Involved in D-xylose catabolism.</text>
</comment>
<comment type="catalytic activity">
    <reaction>
        <text>alpha-D-xylose = alpha-D-xylulofuranose</text>
        <dbReference type="Rhea" id="RHEA:22816"/>
        <dbReference type="ChEBI" id="CHEBI:28518"/>
        <dbReference type="ChEBI" id="CHEBI:188998"/>
        <dbReference type="EC" id="5.3.1.5"/>
    </reaction>
</comment>
<comment type="cofactor">
    <cofactor evidence="1">
        <name>Mg(2+)</name>
        <dbReference type="ChEBI" id="CHEBI:18420"/>
    </cofactor>
    <text evidence="1">Binds 2 magnesium ions per subunit.</text>
</comment>
<comment type="subunit">
    <text>Homotetramer.</text>
</comment>
<comment type="subcellular location">
    <subcellularLocation>
        <location>Cytoplasm</location>
    </subcellularLocation>
</comment>
<comment type="similarity">
    <text evidence="3">Belongs to the xylose isomerase family.</text>
</comment>
<evidence type="ECO:0000250" key="1"/>
<evidence type="ECO:0000269" key="2">
    <source>
    </source>
</evidence>
<evidence type="ECO:0000305" key="3"/>
<reference key="1">
    <citation type="journal article" date="1988" name="Nucleic Acids Res.">
        <title>Nucleotide sequence of the xylose isomerase gene from Streptomyces violaceoniger.</title>
        <authorList>
            <person name="Drocourt D."/>
            <person name="Bejar S."/>
            <person name="Calmels T."/>
            <person name="Reynes J.-P."/>
            <person name="Tiraby G."/>
        </authorList>
    </citation>
    <scope>NUCLEOTIDE SEQUENCE [GENOMIC DNA]</scope>
    <scope>PROTEIN SEQUENCE OF 2-21</scope>
    <source>
        <strain>CBS 409-73</strain>
    </source>
</reference>
<feature type="initiator methionine" description="Removed" evidence="2">
    <location>
        <position position="1"/>
    </location>
</feature>
<feature type="chain" id="PRO_0000195808" description="Xylose isomerase">
    <location>
        <begin position="2"/>
        <end position="389"/>
    </location>
</feature>
<feature type="active site" evidence="1">
    <location>
        <position position="54"/>
    </location>
</feature>
<feature type="active site" evidence="1">
    <location>
        <position position="57"/>
    </location>
</feature>
<feature type="binding site" evidence="1">
    <location>
        <position position="181"/>
    </location>
    <ligand>
        <name>Mg(2+)</name>
        <dbReference type="ChEBI" id="CHEBI:18420"/>
        <label>1</label>
    </ligand>
</feature>
<feature type="binding site" evidence="1">
    <location>
        <position position="217"/>
    </location>
    <ligand>
        <name>Mg(2+)</name>
        <dbReference type="ChEBI" id="CHEBI:18420"/>
        <label>1</label>
    </ligand>
</feature>
<feature type="binding site" evidence="1">
    <location>
        <position position="217"/>
    </location>
    <ligand>
        <name>Mg(2+)</name>
        <dbReference type="ChEBI" id="CHEBI:18420"/>
        <label>2</label>
    </ligand>
</feature>
<feature type="binding site" evidence="1">
    <location>
        <position position="220"/>
    </location>
    <ligand>
        <name>Mg(2+)</name>
        <dbReference type="ChEBI" id="CHEBI:18420"/>
        <label>2</label>
    </ligand>
</feature>
<feature type="binding site" evidence="1">
    <location>
        <position position="245"/>
    </location>
    <ligand>
        <name>Mg(2+)</name>
        <dbReference type="ChEBI" id="CHEBI:18420"/>
        <label>1</label>
    </ligand>
</feature>
<feature type="binding site" evidence="1">
    <location>
        <position position="255"/>
    </location>
    <ligand>
        <name>Mg(2+)</name>
        <dbReference type="ChEBI" id="CHEBI:18420"/>
        <label>2</label>
    </ligand>
</feature>
<feature type="binding site" evidence="1">
    <location>
        <position position="257"/>
    </location>
    <ligand>
        <name>Mg(2+)</name>
        <dbReference type="ChEBI" id="CHEBI:18420"/>
        <label>2</label>
    </ligand>
</feature>
<feature type="binding site" evidence="1">
    <location>
        <position position="287"/>
    </location>
    <ligand>
        <name>Mg(2+)</name>
        <dbReference type="ChEBI" id="CHEBI:18420"/>
        <label>1</label>
    </ligand>
</feature>
<organism>
    <name type="scientific">Streptomyces violaceusniger</name>
    <dbReference type="NCBI Taxonomy" id="68280"/>
    <lineage>
        <taxon>Bacteria</taxon>
        <taxon>Bacillati</taxon>
        <taxon>Actinomycetota</taxon>
        <taxon>Actinomycetes</taxon>
        <taxon>Kitasatosporales</taxon>
        <taxon>Streptomycetaceae</taxon>
        <taxon>Streptomyces</taxon>
        <taxon>Streptomyces violaceusniger group</taxon>
    </lineage>
</organism>
<dbReference type="EC" id="5.3.1.5"/>
<dbReference type="EMBL" id="X12816">
    <property type="protein sequence ID" value="CAA31304.1"/>
    <property type="molecule type" value="Genomic_DNA"/>
</dbReference>
<dbReference type="EMBL" id="M36269">
    <property type="protein sequence ID" value="AAA26839.1"/>
    <property type="molecule type" value="Genomic_DNA"/>
</dbReference>
<dbReference type="PIR" id="S01436">
    <property type="entry name" value="ISSMXV"/>
</dbReference>
<dbReference type="SMR" id="P09033"/>
<dbReference type="GO" id="GO:0005737">
    <property type="term" value="C:cytoplasm"/>
    <property type="evidence" value="ECO:0007669"/>
    <property type="project" value="UniProtKB-SubCell"/>
</dbReference>
<dbReference type="GO" id="GO:0000287">
    <property type="term" value="F:magnesium ion binding"/>
    <property type="evidence" value="ECO:0007669"/>
    <property type="project" value="UniProtKB-UniRule"/>
</dbReference>
<dbReference type="GO" id="GO:0009045">
    <property type="term" value="F:xylose isomerase activity"/>
    <property type="evidence" value="ECO:0007669"/>
    <property type="project" value="UniProtKB-UniRule"/>
</dbReference>
<dbReference type="GO" id="GO:0042732">
    <property type="term" value="P:D-xylose metabolic process"/>
    <property type="evidence" value="ECO:0007669"/>
    <property type="project" value="UniProtKB-UniRule"/>
</dbReference>
<dbReference type="FunFam" id="3.20.20.150:FF:000009">
    <property type="entry name" value="Xylose isomerase"/>
    <property type="match status" value="1"/>
</dbReference>
<dbReference type="Gene3D" id="3.20.20.150">
    <property type="entry name" value="Divalent-metal-dependent TIM barrel enzymes"/>
    <property type="match status" value="1"/>
</dbReference>
<dbReference type="HAMAP" id="MF_00455">
    <property type="entry name" value="Xylose_isom_A"/>
    <property type="match status" value="1"/>
</dbReference>
<dbReference type="InterPro" id="IPR036237">
    <property type="entry name" value="Xyl_isomerase-like_sf"/>
</dbReference>
<dbReference type="InterPro" id="IPR013022">
    <property type="entry name" value="Xyl_isomerase-like_TIM-brl"/>
</dbReference>
<dbReference type="InterPro" id="IPR013453">
    <property type="entry name" value="XylA_actinobac"/>
</dbReference>
<dbReference type="InterPro" id="IPR001998">
    <property type="entry name" value="Xylose_isomerase"/>
</dbReference>
<dbReference type="NCBIfam" id="TIGR02631">
    <property type="entry name" value="xylA_Arthro"/>
    <property type="match status" value="1"/>
</dbReference>
<dbReference type="PANTHER" id="PTHR48408">
    <property type="match status" value="1"/>
</dbReference>
<dbReference type="PANTHER" id="PTHR48408:SF1">
    <property type="entry name" value="XYLOSE ISOMERASE"/>
    <property type="match status" value="1"/>
</dbReference>
<dbReference type="Pfam" id="PF01261">
    <property type="entry name" value="AP_endonuc_2"/>
    <property type="match status" value="1"/>
</dbReference>
<dbReference type="PRINTS" id="PR00688">
    <property type="entry name" value="XYLOSISMRASE"/>
</dbReference>
<dbReference type="SUPFAM" id="SSF51658">
    <property type="entry name" value="Xylose isomerase-like"/>
    <property type="match status" value="1"/>
</dbReference>
<dbReference type="PROSITE" id="PS51415">
    <property type="entry name" value="XYLOSE_ISOMERASE"/>
    <property type="match status" value="1"/>
</dbReference>
<sequence>MSFQPTPEDKFTFGLWTVGWQGRDPFGDATRPALDPVETVQRLAELGAYGVTFHDDDLIPFGSSDTERESHIKRFRQALDATGMTVPMATTNLFTHPVFKDGGFTANDRDVRRYALRKTIRNIDLAAELGAKTYVAWGGREGAESGGAKDVRDALDRMKEAFDLLGEYVTAQGYDLRFAIEPKPNEPRGDILLPTVGHALAFIERLERPELYGVNPEVGHEQMAGLNFPHGIAQALWAGKLFHIDLNGQSGIKYDQDLRFGAGDLRAAFWLVDLLESAGYEGPRHFDFKPPRTEDFDGVWASAEGCMRNYLILKERAAAFRADPEVQEALRAARLDQLAQPTAADGLEALLADRTAFEDFDVEAAAARAAWPFERLDQLAMDHLLGARG</sequence>
<proteinExistence type="evidence at protein level"/>
<protein>
    <recommendedName>
        <fullName>Xylose isomerase</fullName>
        <ecNumber>5.3.1.5</ecNumber>
    </recommendedName>
</protein>
<keyword id="KW-0119">Carbohydrate metabolism</keyword>
<keyword id="KW-0963">Cytoplasm</keyword>
<keyword id="KW-0903">Direct protein sequencing</keyword>
<keyword id="KW-0413">Isomerase</keyword>
<keyword id="KW-0460">Magnesium</keyword>
<keyword id="KW-0479">Metal-binding</keyword>
<keyword id="KW-0859">Xylose metabolism</keyword>